<gene>
    <name evidence="1" type="primary">radA</name>
    <name type="ordered locus">BH0104</name>
</gene>
<comment type="function">
    <text evidence="1">DNA-dependent ATPase involved in processing of recombination intermediates, plays a role in repairing DNA breaks. Stimulates the branch migration of RecA-mediated strand transfer reactions, allowing the 3' invading strand to extend heteroduplex DNA faster. Binds ssDNA in the presence of ADP but not other nucleotides, has ATPase activity that is stimulated by ssDNA and various branched DNA structures, but inhibited by SSB. Does not have RecA's homology-searching function.</text>
</comment>
<comment type="domain">
    <text evidence="1">Has a putative N-terminal zinc-finger, a middle region with homology to RecA with ATPase motifs including the RadA KNRFG motif, while the C-terminus is homologous to Lon protease.</text>
</comment>
<comment type="similarity">
    <text evidence="1">Belongs to the RecA family. RadA subfamily.</text>
</comment>
<proteinExistence type="inferred from homology"/>
<evidence type="ECO:0000255" key="1">
    <source>
        <dbReference type="HAMAP-Rule" id="MF_01498"/>
    </source>
</evidence>
<accession>Q9KGG1</accession>
<reference key="1">
    <citation type="journal article" date="2000" name="Nucleic Acids Res.">
        <title>Complete genome sequence of the alkaliphilic bacterium Bacillus halodurans and genomic sequence comparison with Bacillus subtilis.</title>
        <authorList>
            <person name="Takami H."/>
            <person name="Nakasone K."/>
            <person name="Takaki Y."/>
            <person name="Maeno G."/>
            <person name="Sasaki R."/>
            <person name="Masui N."/>
            <person name="Fuji F."/>
            <person name="Hirama C."/>
            <person name="Nakamura Y."/>
            <person name="Ogasawara N."/>
            <person name="Kuhara S."/>
            <person name="Horikoshi K."/>
        </authorList>
    </citation>
    <scope>NUCLEOTIDE SEQUENCE [LARGE SCALE GENOMIC DNA]</scope>
    <source>
        <strain>ATCC BAA-125 / DSM 18197 / FERM 7344 / JCM 9153 / C-125</strain>
    </source>
</reference>
<organism>
    <name type="scientific">Halalkalibacterium halodurans (strain ATCC BAA-125 / DSM 18197 / FERM 7344 / JCM 9153 / C-125)</name>
    <name type="common">Bacillus halodurans</name>
    <dbReference type="NCBI Taxonomy" id="272558"/>
    <lineage>
        <taxon>Bacteria</taxon>
        <taxon>Bacillati</taxon>
        <taxon>Bacillota</taxon>
        <taxon>Bacilli</taxon>
        <taxon>Bacillales</taxon>
        <taxon>Bacillaceae</taxon>
        <taxon>Halalkalibacterium (ex Joshi et al. 2022)</taxon>
    </lineage>
</organism>
<keyword id="KW-0067">ATP-binding</keyword>
<keyword id="KW-0227">DNA damage</keyword>
<keyword id="KW-0234">DNA repair</keyword>
<keyword id="KW-0238">DNA-binding</keyword>
<keyword id="KW-0378">Hydrolase</keyword>
<keyword id="KW-0479">Metal-binding</keyword>
<keyword id="KW-0547">Nucleotide-binding</keyword>
<keyword id="KW-1185">Reference proteome</keyword>
<keyword id="KW-0346">Stress response</keyword>
<keyword id="KW-0862">Zinc</keyword>
<keyword id="KW-0863">Zinc-finger</keyword>
<feature type="chain" id="PRO_0000187920" description="DNA repair protein RadA">
    <location>
        <begin position="1"/>
        <end position="457"/>
    </location>
</feature>
<feature type="zinc finger region" description="C4-type" evidence="1">
    <location>
        <begin position="10"/>
        <end position="27"/>
    </location>
</feature>
<feature type="region of interest" description="Lon-protease-like" evidence="1">
    <location>
        <begin position="353"/>
        <end position="457"/>
    </location>
</feature>
<feature type="short sequence motif" description="RadA KNRFG motif" evidence="1">
    <location>
        <begin position="254"/>
        <end position="258"/>
    </location>
</feature>
<feature type="binding site" evidence="1">
    <location>
        <begin position="97"/>
        <end position="104"/>
    </location>
    <ligand>
        <name>ATP</name>
        <dbReference type="ChEBI" id="CHEBI:30616"/>
    </ligand>
</feature>
<dbReference type="EC" id="3.6.4.-" evidence="1"/>
<dbReference type="EMBL" id="BA000004">
    <property type="protein sequence ID" value="BAB03823.1"/>
    <property type="molecule type" value="Genomic_DNA"/>
</dbReference>
<dbReference type="PIR" id="H83662">
    <property type="entry name" value="H83662"/>
</dbReference>
<dbReference type="RefSeq" id="WP_010896287.1">
    <property type="nucleotide sequence ID" value="NC_002570.2"/>
</dbReference>
<dbReference type="SMR" id="Q9KGG1"/>
<dbReference type="STRING" id="272558.gene:10725944"/>
<dbReference type="MEROPS" id="S16.A04"/>
<dbReference type="KEGG" id="bha:BH0104"/>
<dbReference type="eggNOG" id="COG1066">
    <property type="taxonomic scope" value="Bacteria"/>
</dbReference>
<dbReference type="HOGENOM" id="CLU_018264_0_1_9"/>
<dbReference type="OrthoDB" id="9803906at2"/>
<dbReference type="Proteomes" id="UP000001258">
    <property type="component" value="Chromosome"/>
</dbReference>
<dbReference type="GO" id="GO:0005829">
    <property type="term" value="C:cytosol"/>
    <property type="evidence" value="ECO:0007669"/>
    <property type="project" value="TreeGrafter"/>
</dbReference>
<dbReference type="GO" id="GO:0005524">
    <property type="term" value="F:ATP binding"/>
    <property type="evidence" value="ECO:0007669"/>
    <property type="project" value="UniProtKB-UniRule"/>
</dbReference>
<dbReference type="GO" id="GO:0016887">
    <property type="term" value="F:ATP hydrolysis activity"/>
    <property type="evidence" value="ECO:0007669"/>
    <property type="project" value="InterPro"/>
</dbReference>
<dbReference type="GO" id="GO:0140664">
    <property type="term" value="F:ATP-dependent DNA damage sensor activity"/>
    <property type="evidence" value="ECO:0007669"/>
    <property type="project" value="InterPro"/>
</dbReference>
<dbReference type="GO" id="GO:0003684">
    <property type="term" value="F:damaged DNA binding"/>
    <property type="evidence" value="ECO:0007669"/>
    <property type="project" value="InterPro"/>
</dbReference>
<dbReference type="GO" id="GO:0008270">
    <property type="term" value="F:zinc ion binding"/>
    <property type="evidence" value="ECO:0007669"/>
    <property type="project" value="UniProtKB-KW"/>
</dbReference>
<dbReference type="GO" id="GO:0000725">
    <property type="term" value="P:recombinational repair"/>
    <property type="evidence" value="ECO:0007669"/>
    <property type="project" value="UniProtKB-UniRule"/>
</dbReference>
<dbReference type="CDD" id="cd01121">
    <property type="entry name" value="RadA_SMS_N"/>
    <property type="match status" value="1"/>
</dbReference>
<dbReference type="FunFam" id="3.30.230.10:FF:000031">
    <property type="entry name" value="DNA repair protein RadA"/>
    <property type="match status" value="1"/>
</dbReference>
<dbReference type="FunFam" id="3.40.50.300:FF:000050">
    <property type="entry name" value="DNA repair protein RadA"/>
    <property type="match status" value="1"/>
</dbReference>
<dbReference type="Gene3D" id="3.30.230.10">
    <property type="match status" value="1"/>
</dbReference>
<dbReference type="Gene3D" id="3.40.50.300">
    <property type="entry name" value="P-loop containing nucleotide triphosphate hydrolases"/>
    <property type="match status" value="1"/>
</dbReference>
<dbReference type="HAMAP" id="MF_01498">
    <property type="entry name" value="RadA_bact"/>
    <property type="match status" value="1"/>
</dbReference>
<dbReference type="InterPro" id="IPR003593">
    <property type="entry name" value="AAA+_ATPase"/>
</dbReference>
<dbReference type="InterPro" id="IPR004504">
    <property type="entry name" value="DNA_repair_RadA"/>
</dbReference>
<dbReference type="InterPro" id="IPR027417">
    <property type="entry name" value="P-loop_NTPase"/>
</dbReference>
<dbReference type="InterPro" id="IPR020588">
    <property type="entry name" value="RecA_ATP-bd"/>
</dbReference>
<dbReference type="InterPro" id="IPR020568">
    <property type="entry name" value="Ribosomal_Su5_D2-typ_SF"/>
</dbReference>
<dbReference type="InterPro" id="IPR014721">
    <property type="entry name" value="Ribsml_uS5_D2-typ_fold_subgr"/>
</dbReference>
<dbReference type="InterPro" id="IPR041166">
    <property type="entry name" value="Rubredoxin_2"/>
</dbReference>
<dbReference type="NCBIfam" id="TIGR00416">
    <property type="entry name" value="sms"/>
    <property type="match status" value="1"/>
</dbReference>
<dbReference type="PANTHER" id="PTHR32472">
    <property type="entry name" value="DNA REPAIR PROTEIN RADA"/>
    <property type="match status" value="1"/>
</dbReference>
<dbReference type="PANTHER" id="PTHR32472:SF10">
    <property type="entry name" value="DNA REPAIR PROTEIN RADA-LIKE PROTEIN"/>
    <property type="match status" value="1"/>
</dbReference>
<dbReference type="Pfam" id="PF13481">
    <property type="entry name" value="AAA_25"/>
    <property type="match status" value="1"/>
</dbReference>
<dbReference type="Pfam" id="PF13541">
    <property type="entry name" value="ChlI"/>
    <property type="match status" value="1"/>
</dbReference>
<dbReference type="Pfam" id="PF18073">
    <property type="entry name" value="Zn_ribbon_LapB"/>
    <property type="match status" value="1"/>
</dbReference>
<dbReference type="PRINTS" id="PR01874">
    <property type="entry name" value="DNAREPAIRADA"/>
</dbReference>
<dbReference type="SMART" id="SM00382">
    <property type="entry name" value="AAA"/>
    <property type="match status" value="1"/>
</dbReference>
<dbReference type="SUPFAM" id="SSF52540">
    <property type="entry name" value="P-loop containing nucleoside triphosphate hydrolases"/>
    <property type="match status" value="1"/>
</dbReference>
<dbReference type="SUPFAM" id="SSF54211">
    <property type="entry name" value="Ribosomal protein S5 domain 2-like"/>
    <property type="match status" value="1"/>
</dbReference>
<dbReference type="PROSITE" id="PS50162">
    <property type="entry name" value="RECA_2"/>
    <property type="match status" value="1"/>
</dbReference>
<protein>
    <recommendedName>
        <fullName evidence="1">DNA repair protein RadA</fullName>
        <ecNumber evidence="1">3.6.4.-</ecNumber>
    </recommendedName>
    <alternativeName>
        <fullName evidence="1">Branch migration protein RadA</fullName>
    </alternativeName>
</protein>
<sequence length="457" mass="49763">MAKKKTKFMCQECGYESAKWMGKCPGCQSWNSMVEEFTEVKAKSSRSYVTSGAGIAKPQPITKVEREQEPRIDTSMKELNRVLGGGIVPGSLVLVGGDPGIGKSTLLLQLSARLADLKQRVLYISGEESVKQTKIRSDRLGVLSDHLYVLAETDMEKIEQAIGEVDPTLVIIDSIQTVYQDEITSAPGSVAQVRECTASFMRIAKTTGVAIFIVGHVTKQGAIAGPKLLEHMVDSVLYFEGERHHTYRILRAVKNRFGSTNEMGIFEMKESGLEEVANPSEIFLEDRSSGVAGSTVVASMEGTRPVLVELQALISPTSFGNPRRMATGVDHNRISLLMAVLEKRVGMLLQNQDAYVNVAGGVRLDEPAIDLGIAVSIASSFRNQHTNPHEVVIGEIGLTGEVRRVSRIDQRVNEAAKLGFKRVIIPDKNLGGWTIPSTIEVIGVSTVQDALEVTLGR</sequence>
<name>RADA_HALH5</name>